<gene>
    <name evidence="2" type="primary">tuf1</name>
    <name type="ordered locus">mma_3413</name>
</gene>
<gene>
    <name evidence="2" type="primary">tuf2</name>
    <name type="ordered locus">mma_3427</name>
</gene>
<organism>
    <name type="scientific">Janthinobacterium sp. (strain Marseille)</name>
    <name type="common">Minibacterium massiliensis</name>
    <dbReference type="NCBI Taxonomy" id="375286"/>
    <lineage>
        <taxon>Bacteria</taxon>
        <taxon>Pseudomonadati</taxon>
        <taxon>Pseudomonadota</taxon>
        <taxon>Betaproteobacteria</taxon>
        <taxon>Burkholderiales</taxon>
        <taxon>Oxalobacteraceae</taxon>
        <taxon>Janthinobacterium</taxon>
    </lineage>
</organism>
<keyword id="KW-0963">Cytoplasm</keyword>
<keyword id="KW-0251">Elongation factor</keyword>
<keyword id="KW-0342">GTP-binding</keyword>
<keyword id="KW-0378">Hydrolase</keyword>
<keyword id="KW-0460">Magnesium</keyword>
<keyword id="KW-0479">Metal-binding</keyword>
<keyword id="KW-0547">Nucleotide-binding</keyword>
<keyword id="KW-0648">Protein biosynthesis</keyword>
<evidence type="ECO:0000250" key="1"/>
<evidence type="ECO:0000255" key="2">
    <source>
        <dbReference type="HAMAP-Rule" id="MF_00118"/>
    </source>
</evidence>
<sequence>MAKGKFERTKPHVNVGTIGHVDHGKTTLTAAIATVLSKKFGGEAKGYDQIDNAPEEKARGITINTSHVEYETESRHYAHVDCPGHADYVKNMITGAAQMDGAILVCSAADGPMPQTREHILLSRQVGVPYIIVFLNKADMVDDAELLELVEMEVRELLSKYEFPGDDLPIVKGSAKLALEGDTGPLGEQAILALANALDTYIPTPERAVDGAFLLPVEDVFSISGRGTVVTGRIERGIIKVGEEIEIVGIRDTQKTTCTGVEMFRKLLDQGQAGDNVGVLLRGTKREDVERGQVLAKPGSIKPHKHFTGEIYVLSKDEGGRHTPFFNNYRPQFYFRTTDVTGSIELPKDKEMVMPGDNVSITVMLINPIAMEEGLRFAIREGGRTVGAGVVAKIIE</sequence>
<reference key="1">
    <citation type="journal article" date="2007" name="PLoS Genet.">
        <title>Genome analysis of Minibacterium massiliensis highlights the convergent evolution of water-living bacteria.</title>
        <authorList>
            <person name="Audic S."/>
            <person name="Robert C."/>
            <person name="Campagna B."/>
            <person name="Parinello H."/>
            <person name="Claverie J.-M."/>
            <person name="Raoult D."/>
            <person name="Drancourt M."/>
        </authorList>
    </citation>
    <scope>NUCLEOTIDE SEQUENCE [LARGE SCALE GENOMIC DNA]</scope>
    <source>
        <strain>Marseille</strain>
    </source>
</reference>
<accession>A6T3K6</accession>
<protein>
    <recommendedName>
        <fullName evidence="2">Elongation factor Tu</fullName>
        <shortName evidence="2">EF-Tu</shortName>
        <ecNumber evidence="2">3.6.5.3</ecNumber>
    </recommendedName>
</protein>
<dbReference type="EC" id="3.6.5.3" evidence="2"/>
<dbReference type="EMBL" id="CP000269">
    <property type="protein sequence ID" value="ABR89570.1"/>
    <property type="molecule type" value="Genomic_DNA"/>
</dbReference>
<dbReference type="EMBL" id="CP000269">
    <property type="protein sequence ID" value="ABR89588.1"/>
    <property type="molecule type" value="Genomic_DNA"/>
</dbReference>
<dbReference type="RefSeq" id="WP_012081251.1">
    <property type="nucleotide sequence ID" value="NC_009659.1"/>
</dbReference>
<dbReference type="SMR" id="A6T3K6"/>
<dbReference type="STRING" id="375286.mma_3413"/>
<dbReference type="KEGG" id="mms:mma_3413"/>
<dbReference type="KEGG" id="mms:mma_3427"/>
<dbReference type="eggNOG" id="COG0050">
    <property type="taxonomic scope" value="Bacteria"/>
</dbReference>
<dbReference type="HOGENOM" id="CLU_007265_0_0_4"/>
<dbReference type="OrthoDB" id="9803139at2"/>
<dbReference type="Proteomes" id="UP000006388">
    <property type="component" value="Chromosome"/>
</dbReference>
<dbReference type="GO" id="GO:0005829">
    <property type="term" value="C:cytosol"/>
    <property type="evidence" value="ECO:0007669"/>
    <property type="project" value="TreeGrafter"/>
</dbReference>
<dbReference type="GO" id="GO:0005525">
    <property type="term" value="F:GTP binding"/>
    <property type="evidence" value="ECO:0007669"/>
    <property type="project" value="UniProtKB-UniRule"/>
</dbReference>
<dbReference type="GO" id="GO:0003924">
    <property type="term" value="F:GTPase activity"/>
    <property type="evidence" value="ECO:0007669"/>
    <property type="project" value="InterPro"/>
</dbReference>
<dbReference type="GO" id="GO:0097216">
    <property type="term" value="F:guanosine tetraphosphate binding"/>
    <property type="evidence" value="ECO:0007669"/>
    <property type="project" value="UniProtKB-ARBA"/>
</dbReference>
<dbReference type="GO" id="GO:0003746">
    <property type="term" value="F:translation elongation factor activity"/>
    <property type="evidence" value="ECO:0007669"/>
    <property type="project" value="UniProtKB-UniRule"/>
</dbReference>
<dbReference type="CDD" id="cd01884">
    <property type="entry name" value="EF_Tu"/>
    <property type="match status" value="1"/>
</dbReference>
<dbReference type="CDD" id="cd03697">
    <property type="entry name" value="EFTU_II"/>
    <property type="match status" value="1"/>
</dbReference>
<dbReference type="CDD" id="cd03707">
    <property type="entry name" value="EFTU_III"/>
    <property type="match status" value="1"/>
</dbReference>
<dbReference type="FunFam" id="2.40.30.10:FF:000001">
    <property type="entry name" value="Elongation factor Tu"/>
    <property type="match status" value="1"/>
</dbReference>
<dbReference type="FunFam" id="3.40.50.300:FF:000003">
    <property type="entry name" value="Elongation factor Tu"/>
    <property type="match status" value="1"/>
</dbReference>
<dbReference type="Gene3D" id="3.40.50.300">
    <property type="entry name" value="P-loop containing nucleotide triphosphate hydrolases"/>
    <property type="match status" value="1"/>
</dbReference>
<dbReference type="Gene3D" id="2.40.30.10">
    <property type="entry name" value="Translation factors"/>
    <property type="match status" value="2"/>
</dbReference>
<dbReference type="HAMAP" id="MF_00118_B">
    <property type="entry name" value="EF_Tu_B"/>
    <property type="match status" value="1"/>
</dbReference>
<dbReference type="InterPro" id="IPR041709">
    <property type="entry name" value="EF-Tu_GTP-bd"/>
</dbReference>
<dbReference type="InterPro" id="IPR050055">
    <property type="entry name" value="EF-Tu_GTPase"/>
</dbReference>
<dbReference type="InterPro" id="IPR004161">
    <property type="entry name" value="EFTu-like_2"/>
</dbReference>
<dbReference type="InterPro" id="IPR033720">
    <property type="entry name" value="EFTU_2"/>
</dbReference>
<dbReference type="InterPro" id="IPR031157">
    <property type="entry name" value="G_TR_CS"/>
</dbReference>
<dbReference type="InterPro" id="IPR027417">
    <property type="entry name" value="P-loop_NTPase"/>
</dbReference>
<dbReference type="InterPro" id="IPR005225">
    <property type="entry name" value="Small_GTP-bd"/>
</dbReference>
<dbReference type="InterPro" id="IPR000795">
    <property type="entry name" value="T_Tr_GTP-bd_dom"/>
</dbReference>
<dbReference type="InterPro" id="IPR009000">
    <property type="entry name" value="Transl_B-barrel_sf"/>
</dbReference>
<dbReference type="InterPro" id="IPR009001">
    <property type="entry name" value="Transl_elong_EF1A/Init_IF2_C"/>
</dbReference>
<dbReference type="InterPro" id="IPR004541">
    <property type="entry name" value="Transl_elong_EFTu/EF1A_bac/org"/>
</dbReference>
<dbReference type="InterPro" id="IPR004160">
    <property type="entry name" value="Transl_elong_EFTu/EF1A_C"/>
</dbReference>
<dbReference type="NCBIfam" id="TIGR00485">
    <property type="entry name" value="EF-Tu"/>
    <property type="match status" value="1"/>
</dbReference>
<dbReference type="NCBIfam" id="NF000766">
    <property type="entry name" value="PRK00049.1"/>
    <property type="match status" value="1"/>
</dbReference>
<dbReference type="NCBIfam" id="NF009372">
    <property type="entry name" value="PRK12735.1"/>
    <property type="match status" value="1"/>
</dbReference>
<dbReference type="NCBIfam" id="NF009373">
    <property type="entry name" value="PRK12736.1"/>
    <property type="match status" value="1"/>
</dbReference>
<dbReference type="NCBIfam" id="TIGR00231">
    <property type="entry name" value="small_GTP"/>
    <property type="match status" value="1"/>
</dbReference>
<dbReference type="PANTHER" id="PTHR43721:SF22">
    <property type="entry name" value="ELONGATION FACTOR TU, MITOCHONDRIAL"/>
    <property type="match status" value="1"/>
</dbReference>
<dbReference type="PANTHER" id="PTHR43721">
    <property type="entry name" value="ELONGATION FACTOR TU-RELATED"/>
    <property type="match status" value="1"/>
</dbReference>
<dbReference type="Pfam" id="PF00009">
    <property type="entry name" value="GTP_EFTU"/>
    <property type="match status" value="1"/>
</dbReference>
<dbReference type="Pfam" id="PF03144">
    <property type="entry name" value="GTP_EFTU_D2"/>
    <property type="match status" value="1"/>
</dbReference>
<dbReference type="Pfam" id="PF03143">
    <property type="entry name" value="GTP_EFTU_D3"/>
    <property type="match status" value="1"/>
</dbReference>
<dbReference type="PRINTS" id="PR00315">
    <property type="entry name" value="ELONGATNFCT"/>
</dbReference>
<dbReference type="SUPFAM" id="SSF50465">
    <property type="entry name" value="EF-Tu/eEF-1alpha/eIF2-gamma C-terminal domain"/>
    <property type="match status" value="1"/>
</dbReference>
<dbReference type="SUPFAM" id="SSF52540">
    <property type="entry name" value="P-loop containing nucleoside triphosphate hydrolases"/>
    <property type="match status" value="1"/>
</dbReference>
<dbReference type="SUPFAM" id="SSF50447">
    <property type="entry name" value="Translation proteins"/>
    <property type="match status" value="1"/>
</dbReference>
<dbReference type="PROSITE" id="PS00301">
    <property type="entry name" value="G_TR_1"/>
    <property type="match status" value="1"/>
</dbReference>
<dbReference type="PROSITE" id="PS51722">
    <property type="entry name" value="G_TR_2"/>
    <property type="match status" value="1"/>
</dbReference>
<proteinExistence type="inferred from homology"/>
<name>EFTU_JANMA</name>
<feature type="chain" id="PRO_0000337410" description="Elongation factor Tu">
    <location>
        <begin position="1"/>
        <end position="396"/>
    </location>
</feature>
<feature type="domain" description="tr-type G">
    <location>
        <begin position="10"/>
        <end position="206"/>
    </location>
</feature>
<feature type="region of interest" description="G1" evidence="1">
    <location>
        <begin position="19"/>
        <end position="26"/>
    </location>
</feature>
<feature type="region of interest" description="G2" evidence="1">
    <location>
        <begin position="60"/>
        <end position="64"/>
    </location>
</feature>
<feature type="region of interest" description="G3" evidence="1">
    <location>
        <begin position="81"/>
        <end position="84"/>
    </location>
</feature>
<feature type="region of interest" description="G4" evidence="1">
    <location>
        <begin position="136"/>
        <end position="139"/>
    </location>
</feature>
<feature type="region of interest" description="G5" evidence="1">
    <location>
        <begin position="174"/>
        <end position="176"/>
    </location>
</feature>
<feature type="binding site" evidence="2">
    <location>
        <begin position="19"/>
        <end position="26"/>
    </location>
    <ligand>
        <name>GTP</name>
        <dbReference type="ChEBI" id="CHEBI:37565"/>
    </ligand>
</feature>
<feature type="binding site" evidence="2">
    <location>
        <position position="26"/>
    </location>
    <ligand>
        <name>Mg(2+)</name>
        <dbReference type="ChEBI" id="CHEBI:18420"/>
    </ligand>
</feature>
<feature type="binding site" evidence="2">
    <location>
        <begin position="81"/>
        <end position="85"/>
    </location>
    <ligand>
        <name>GTP</name>
        <dbReference type="ChEBI" id="CHEBI:37565"/>
    </ligand>
</feature>
<feature type="binding site" evidence="2">
    <location>
        <begin position="136"/>
        <end position="139"/>
    </location>
    <ligand>
        <name>GTP</name>
        <dbReference type="ChEBI" id="CHEBI:37565"/>
    </ligand>
</feature>
<comment type="function">
    <text evidence="2">GTP hydrolase that promotes the GTP-dependent binding of aminoacyl-tRNA to the A-site of ribosomes during protein biosynthesis.</text>
</comment>
<comment type="catalytic activity">
    <reaction evidence="2">
        <text>GTP + H2O = GDP + phosphate + H(+)</text>
        <dbReference type="Rhea" id="RHEA:19669"/>
        <dbReference type="ChEBI" id="CHEBI:15377"/>
        <dbReference type="ChEBI" id="CHEBI:15378"/>
        <dbReference type="ChEBI" id="CHEBI:37565"/>
        <dbReference type="ChEBI" id="CHEBI:43474"/>
        <dbReference type="ChEBI" id="CHEBI:58189"/>
        <dbReference type="EC" id="3.6.5.3"/>
    </reaction>
    <physiologicalReaction direction="left-to-right" evidence="2">
        <dbReference type="Rhea" id="RHEA:19670"/>
    </physiologicalReaction>
</comment>
<comment type="subunit">
    <text evidence="2">Monomer.</text>
</comment>
<comment type="subcellular location">
    <subcellularLocation>
        <location evidence="2">Cytoplasm</location>
    </subcellularLocation>
</comment>
<comment type="similarity">
    <text evidence="2">Belongs to the TRAFAC class translation factor GTPase superfamily. Classic translation factor GTPase family. EF-Tu/EF-1A subfamily.</text>
</comment>